<proteinExistence type="inferred from homology"/>
<feature type="chain" id="PRO_1000056788" description="UPF0235 protein Shew185_3043">
    <location>
        <begin position="1"/>
        <end position="99"/>
    </location>
</feature>
<evidence type="ECO:0000255" key="1">
    <source>
        <dbReference type="HAMAP-Rule" id="MF_00634"/>
    </source>
</evidence>
<comment type="similarity">
    <text evidence="1">Belongs to the UPF0235 family.</text>
</comment>
<protein>
    <recommendedName>
        <fullName evidence="1">UPF0235 protein Shew185_3043</fullName>
    </recommendedName>
</protein>
<reference key="1">
    <citation type="submission" date="2007-07" db="EMBL/GenBank/DDBJ databases">
        <title>Complete sequence of chromosome of Shewanella baltica OS185.</title>
        <authorList>
            <consortium name="US DOE Joint Genome Institute"/>
            <person name="Copeland A."/>
            <person name="Lucas S."/>
            <person name="Lapidus A."/>
            <person name="Barry K."/>
            <person name="Glavina del Rio T."/>
            <person name="Dalin E."/>
            <person name="Tice H."/>
            <person name="Pitluck S."/>
            <person name="Sims D."/>
            <person name="Brettin T."/>
            <person name="Bruce D."/>
            <person name="Detter J.C."/>
            <person name="Han C."/>
            <person name="Schmutz J."/>
            <person name="Larimer F."/>
            <person name="Land M."/>
            <person name="Hauser L."/>
            <person name="Kyrpides N."/>
            <person name="Mikhailova N."/>
            <person name="Brettar I."/>
            <person name="Rodrigues J."/>
            <person name="Konstantinidis K."/>
            <person name="Tiedje J."/>
            <person name="Richardson P."/>
        </authorList>
    </citation>
    <scope>NUCLEOTIDE SEQUENCE [LARGE SCALE GENOMIC DNA]</scope>
    <source>
        <strain>OS185</strain>
    </source>
</reference>
<accession>A6WQT5</accession>
<organism>
    <name type="scientific">Shewanella baltica (strain OS185)</name>
    <dbReference type="NCBI Taxonomy" id="402882"/>
    <lineage>
        <taxon>Bacteria</taxon>
        <taxon>Pseudomonadati</taxon>
        <taxon>Pseudomonadota</taxon>
        <taxon>Gammaproteobacteria</taxon>
        <taxon>Alteromonadales</taxon>
        <taxon>Shewanellaceae</taxon>
        <taxon>Shewanella</taxon>
    </lineage>
</organism>
<gene>
    <name type="ordered locus">Shew185_3043</name>
</gene>
<name>Y3043_SHEB8</name>
<sequence length="99" mass="10865">MSAVTLQQGDLLLNLYIQPKASRDQIVGLHGDELKVAITAPPIDGKANAHLSKYLAKTFKVPKSDIHIMKGELGRHKQIRVIDPKIIPSIITELMGQTS</sequence>
<dbReference type="EMBL" id="CP000753">
    <property type="protein sequence ID" value="ABS09174.1"/>
    <property type="molecule type" value="Genomic_DNA"/>
</dbReference>
<dbReference type="SMR" id="A6WQT5"/>
<dbReference type="KEGG" id="sbm:Shew185_3043"/>
<dbReference type="HOGENOM" id="CLU_130694_5_0_6"/>
<dbReference type="GO" id="GO:0005737">
    <property type="term" value="C:cytoplasm"/>
    <property type="evidence" value="ECO:0007669"/>
    <property type="project" value="TreeGrafter"/>
</dbReference>
<dbReference type="Gene3D" id="3.30.1200.10">
    <property type="entry name" value="YggU-like"/>
    <property type="match status" value="1"/>
</dbReference>
<dbReference type="HAMAP" id="MF_00634">
    <property type="entry name" value="UPF0235"/>
    <property type="match status" value="1"/>
</dbReference>
<dbReference type="InterPro" id="IPR003746">
    <property type="entry name" value="DUF167"/>
</dbReference>
<dbReference type="InterPro" id="IPR036591">
    <property type="entry name" value="YggU-like_sf"/>
</dbReference>
<dbReference type="NCBIfam" id="TIGR00251">
    <property type="entry name" value="DUF167 family protein"/>
    <property type="match status" value="1"/>
</dbReference>
<dbReference type="NCBIfam" id="NF003466">
    <property type="entry name" value="PRK05090.1"/>
    <property type="match status" value="1"/>
</dbReference>
<dbReference type="PANTHER" id="PTHR13420">
    <property type="entry name" value="UPF0235 PROTEIN C15ORF40"/>
    <property type="match status" value="1"/>
</dbReference>
<dbReference type="PANTHER" id="PTHR13420:SF7">
    <property type="entry name" value="UPF0235 PROTEIN C15ORF40"/>
    <property type="match status" value="1"/>
</dbReference>
<dbReference type="Pfam" id="PF02594">
    <property type="entry name" value="DUF167"/>
    <property type="match status" value="1"/>
</dbReference>
<dbReference type="SMART" id="SM01152">
    <property type="entry name" value="DUF167"/>
    <property type="match status" value="1"/>
</dbReference>
<dbReference type="SUPFAM" id="SSF69786">
    <property type="entry name" value="YggU-like"/>
    <property type="match status" value="1"/>
</dbReference>